<evidence type="ECO:0000255" key="1">
    <source>
        <dbReference type="HAMAP-Rule" id="MF_01646"/>
    </source>
</evidence>
<comment type="function">
    <text evidence="1">Multifunctional enzyme that catalyzes the SAM-dependent methylations of uroporphyrinogen III at position C-2 and C-7 to form precorrin-2 via precorrin-1. Then it catalyzes the NAD-dependent ring dehydrogenation of precorrin-2 to yield sirohydrochlorin. Finally, it catalyzes the ferrochelation of sirohydrochlorin to yield siroheme.</text>
</comment>
<comment type="catalytic activity">
    <reaction evidence="1">
        <text>uroporphyrinogen III + 2 S-adenosyl-L-methionine = precorrin-2 + 2 S-adenosyl-L-homocysteine + H(+)</text>
        <dbReference type="Rhea" id="RHEA:32459"/>
        <dbReference type="ChEBI" id="CHEBI:15378"/>
        <dbReference type="ChEBI" id="CHEBI:57308"/>
        <dbReference type="ChEBI" id="CHEBI:57856"/>
        <dbReference type="ChEBI" id="CHEBI:58827"/>
        <dbReference type="ChEBI" id="CHEBI:59789"/>
        <dbReference type="EC" id="2.1.1.107"/>
    </reaction>
</comment>
<comment type="catalytic activity">
    <reaction evidence="1">
        <text>precorrin-2 + NAD(+) = sirohydrochlorin + NADH + 2 H(+)</text>
        <dbReference type="Rhea" id="RHEA:15613"/>
        <dbReference type="ChEBI" id="CHEBI:15378"/>
        <dbReference type="ChEBI" id="CHEBI:57540"/>
        <dbReference type="ChEBI" id="CHEBI:57945"/>
        <dbReference type="ChEBI" id="CHEBI:58351"/>
        <dbReference type="ChEBI" id="CHEBI:58827"/>
        <dbReference type="EC" id="1.3.1.76"/>
    </reaction>
</comment>
<comment type="catalytic activity">
    <reaction evidence="1">
        <text>siroheme + 2 H(+) = sirohydrochlorin + Fe(2+)</text>
        <dbReference type="Rhea" id="RHEA:24360"/>
        <dbReference type="ChEBI" id="CHEBI:15378"/>
        <dbReference type="ChEBI" id="CHEBI:29033"/>
        <dbReference type="ChEBI" id="CHEBI:58351"/>
        <dbReference type="ChEBI" id="CHEBI:60052"/>
        <dbReference type="EC" id="4.99.1.4"/>
    </reaction>
</comment>
<comment type="pathway">
    <text evidence="1">Cofactor biosynthesis; adenosylcobalamin biosynthesis; precorrin-2 from uroporphyrinogen III: step 1/1.</text>
</comment>
<comment type="pathway">
    <text evidence="1">Cofactor biosynthesis; adenosylcobalamin biosynthesis; sirohydrochlorin from precorrin-2: step 1/1.</text>
</comment>
<comment type="pathway">
    <text evidence="1">Porphyrin-containing compound metabolism; siroheme biosynthesis; precorrin-2 from uroporphyrinogen III: step 1/1.</text>
</comment>
<comment type="pathway">
    <text evidence="1">Porphyrin-containing compound metabolism; siroheme biosynthesis; siroheme from sirohydrochlorin: step 1/1.</text>
</comment>
<comment type="pathway">
    <text evidence="1">Porphyrin-containing compound metabolism; siroheme biosynthesis; sirohydrochlorin from precorrin-2: step 1/1.</text>
</comment>
<comment type="similarity">
    <text evidence="1">In the N-terminal section; belongs to the precorrin-2 dehydrogenase / sirohydrochlorin ferrochelatase family.</text>
</comment>
<comment type="similarity">
    <text evidence="1">In the C-terminal section; belongs to the precorrin methyltransferase family.</text>
</comment>
<feature type="chain" id="PRO_0000330495" description="Siroheme synthase">
    <location>
        <begin position="1"/>
        <end position="474"/>
    </location>
</feature>
<feature type="region of interest" description="Precorrin-2 dehydrogenase /sirohydrochlorin ferrochelatase" evidence="1">
    <location>
        <begin position="1"/>
        <end position="202"/>
    </location>
</feature>
<feature type="region of interest" description="Uroporphyrinogen-III C-methyltransferase" evidence="1">
    <location>
        <begin position="218"/>
        <end position="474"/>
    </location>
</feature>
<feature type="active site" description="Proton acceptor" evidence="1">
    <location>
        <position position="250"/>
    </location>
</feature>
<feature type="active site" description="Proton donor" evidence="1">
    <location>
        <position position="272"/>
    </location>
</feature>
<feature type="binding site" evidence="1">
    <location>
        <begin position="22"/>
        <end position="23"/>
    </location>
    <ligand>
        <name>NAD(+)</name>
        <dbReference type="ChEBI" id="CHEBI:57540"/>
    </ligand>
</feature>
<feature type="binding site" evidence="1">
    <location>
        <begin position="41"/>
        <end position="42"/>
    </location>
    <ligand>
        <name>NAD(+)</name>
        <dbReference type="ChEBI" id="CHEBI:57540"/>
    </ligand>
</feature>
<feature type="binding site" evidence="1">
    <location>
        <position position="227"/>
    </location>
    <ligand>
        <name>S-adenosyl-L-methionine</name>
        <dbReference type="ChEBI" id="CHEBI:59789"/>
    </ligand>
</feature>
<feature type="binding site" evidence="1">
    <location>
        <begin position="303"/>
        <end position="305"/>
    </location>
    <ligand>
        <name>S-adenosyl-L-methionine</name>
        <dbReference type="ChEBI" id="CHEBI:59789"/>
    </ligand>
</feature>
<feature type="binding site" evidence="1">
    <location>
        <position position="308"/>
    </location>
    <ligand>
        <name>S-adenosyl-L-methionine</name>
        <dbReference type="ChEBI" id="CHEBI:59789"/>
    </ligand>
</feature>
<feature type="binding site" evidence="1">
    <location>
        <begin position="333"/>
        <end position="334"/>
    </location>
    <ligand>
        <name>S-adenosyl-L-methionine</name>
        <dbReference type="ChEBI" id="CHEBI:59789"/>
    </ligand>
</feature>
<feature type="binding site" evidence="1">
    <location>
        <position position="385"/>
    </location>
    <ligand>
        <name>S-adenosyl-L-methionine</name>
        <dbReference type="ChEBI" id="CHEBI:59789"/>
    </ligand>
</feature>
<feature type="binding site" evidence="1">
    <location>
        <position position="414"/>
    </location>
    <ligand>
        <name>S-adenosyl-L-methionine</name>
        <dbReference type="ChEBI" id="CHEBI:59789"/>
    </ligand>
</feature>
<feature type="modified residue" description="Phosphoserine" evidence="1">
    <location>
        <position position="126"/>
    </location>
</feature>
<name>CYSG_BLOPB</name>
<accession>Q493N1</accession>
<gene>
    <name evidence="1" type="primary">cysG</name>
    <name type="ordered locus">BPEN_166</name>
</gene>
<sequence length="474" mass="52601">MEYLPIFIDLKNRPVLVVGGGAVAARKIHMLQRATITIVAPALCTELKKVLIKQNISWISKNFQPIMLNKVILVIVATNDSKLNTFIYQNAEKHNILINTVDDKNKCSFIFPAIIDRNPVLIGISSCGKAPILVRILREKLELLLPKSLGFVAKLAGAWRNKVKQHIVDTVLRRQFWEKIFYNGHVVTLMEKGRPKEANKVLNYALNNSVKNKNNKTGHVTLVGAGPGDIGLLTIRGLQVIQQADIILYDYLVNSDILDLARRDADKICVGKHVGNHSISQKKLNQFIVQLAQKGNKVVRLKGGDPFIFGRGGEELQAISEAGIAFQVVPGITAGIGVAAYSGIPLTHRKYAHSVVFITGHNTNGDNQFNWNSLSNNQQTLVIYMGKINAISIRNNLIIHGRNMHTPVAVISRGTYQDQKILIGTLIELEKLTQMADHPALLVIGDVVSLHSKINWFGQKALHYYLINSIINLI</sequence>
<reference key="1">
    <citation type="journal article" date="2005" name="Genome Res.">
        <title>Genome sequence of Blochmannia pennsylvanicus indicates parallel evolutionary trends among bacterial mutualists of insects.</title>
        <authorList>
            <person name="Degnan P.H."/>
            <person name="Lazarus A.B."/>
            <person name="Wernegreen J.J."/>
        </authorList>
    </citation>
    <scope>NUCLEOTIDE SEQUENCE [LARGE SCALE GENOMIC DNA]</scope>
    <source>
        <strain>BPEN</strain>
    </source>
</reference>
<organism>
    <name type="scientific">Blochmanniella pennsylvanica (strain BPEN)</name>
    <dbReference type="NCBI Taxonomy" id="291272"/>
    <lineage>
        <taxon>Bacteria</taxon>
        <taxon>Pseudomonadati</taxon>
        <taxon>Pseudomonadota</taxon>
        <taxon>Gammaproteobacteria</taxon>
        <taxon>Enterobacterales</taxon>
        <taxon>Enterobacteriaceae</taxon>
        <taxon>ant endosymbionts</taxon>
        <taxon>Candidatus Blochmanniella</taxon>
    </lineage>
</organism>
<proteinExistence type="inferred from homology"/>
<keyword id="KW-0169">Cobalamin biosynthesis</keyword>
<keyword id="KW-0456">Lyase</keyword>
<keyword id="KW-0489">Methyltransferase</keyword>
<keyword id="KW-0511">Multifunctional enzyme</keyword>
<keyword id="KW-0520">NAD</keyword>
<keyword id="KW-0560">Oxidoreductase</keyword>
<keyword id="KW-0597">Phosphoprotein</keyword>
<keyword id="KW-0627">Porphyrin biosynthesis</keyword>
<keyword id="KW-1185">Reference proteome</keyword>
<keyword id="KW-0949">S-adenosyl-L-methionine</keyword>
<keyword id="KW-0808">Transferase</keyword>
<dbReference type="EC" id="2.1.1.107" evidence="1"/>
<dbReference type="EC" id="1.3.1.76" evidence="1"/>
<dbReference type="EC" id="4.99.1.4" evidence="1"/>
<dbReference type="EMBL" id="CP000016">
    <property type="protein sequence ID" value="AAZ40806.1"/>
    <property type="molecule type" value="Genomic_DNA"/>
</dbReference>
<dbReference type="RefSeq" id="WP_011282713.1">
    <property type="nucleotide sequence ID" value="NC_007292.1"/>
</dbReference>
<dbReference type="SMR" id="Q493N1"/>
<dbReference type="STRING" id="291272.BPEN_166"/>
<dbReference type="KEGG" id="bpn:BPEN_166"/>
<dbReference type="eggNOG" id="COG0007">
    <property type="taxonomic scope" value="Bacteria"/>
</dbReference>
<dbReference type="eggNOG" id="COG1648">
    <property type="taxonomic scope" value="Bacteria"/>
</dbReference>
<dbReference type="HOGENOM" id="CLU_011276_2_0_6"/>
<dbReference type="OrthoDB" id="9815856at2"/>
<dbReference type="UniPathway" id="UPA00148">
    <property type="reaction ID" value="UER00211"/>
</dbReference>
<dbReference type="UniPathway" id="UPA00148">
    <property type="reaction ID" value="UER00222"/>
</dbReference>
<dbReference type="UniPathway" id="UPA00262">
    <property type="reaction ID" value="UER00211"/>
</dbReference>
<dbReference type="UniPathway" id="UPA00262">
    <property type="reaction ID" value="UER00222"/>
</dbReference>
<dbReference type="UniPathway" id="UPA00262">
    <property type="reaction ID" value="UER00376"/>
</dbReference>
<dbReference type="Proteomes" id="UP000007794">
    <property type="component" value="Chromosome"/>
</dbReference>
<dbReference type="GO" id="GO:0051287">
    <property type="term" value="F:NAD binding"/>
    <property type="evidence" value="ECO:0007669"/>
    <property type="project" value="InterPro"/>
</dbReference>
<dbReference type="GO" id="GO:0043115">
    <property type="term" value="F:precorrin-2 dehydrogenase activity"/>
    <property type="evidence" value="ECO:0007669"/>
    <property type="project" value="UniProtKB-UniRule"/>
</dbReference>
<dbReference type="GO" id="GO:0051266">
    <property type="term" value="F:sirohydrochlorin ferrochelatase activity"/>
    <property type="evidence" value="ECO:0007669"/>
    <property type="project" value="UniProtKB-EC"/>
</dbReference>
<dbReference type="GO" id="GO:0004851">
    <property type="term" value="F:uroporphyrin-III C-methyltransferase activity"/>
    <property type="evidence" value="ECO:0007669"/>
    <property type="project" value="UniProtKB-UniRule"/>
</dbReference>
<dbReference type="GO" id="GO:0009236">
    <property type="term" value="P:cobalamin biosynthetic process"/>
    <property type="evidence" value="ECO:0007669"/>
    <property type="project" value="UniProtKB-UniRule"/>
</dbReference>
<dbReference type="GO" id="GO:0032259">
    <property type="term" value="P:methylation"/>
    <property type="evidence" value="ECO:0007669"/>
    <property type="project" value="UniProtKB-KW"/>
</dbReference>
<dbReference type="GO" id="GO:0019354">
    <property type="term" value="P:siroheme biosynthetic process"/>
    <property type="evidence" value="ECO:0007669"/>
    <property type="project" value="UniProtKB-UniRule"/>
</dbReference>
<dbReference type="CDD" id="cd11642">
    <property type="entry name" value="SUMT"/>
    <property type="match status" value="1"/>
</dbReference>
<dbReference type="FunFam" id="3.30.950.10:FF:000001">
    <property type="entry name" value="Siroheme synthase"/>
    <property type="match status" value="1"/>
</dbReference>
<dbReference type="FunFam" id="3.40.1010.10:FF:000001">
    <property type="entry name" value="Siroheme synthase"/>
    <property type="match status" value="1"/>
</dbReference>
<dbReference type="Gene3D" id="3.40.1010.10">
    <property type="entry name" value="Cobalt-precorrin-4 Transmethylase, Domain 1"/>
    <property type="match status" value="1"/>
</dbReference>
<dbReference type="Gene3D" id="3.30.950.10">
    <property type="entry name" value="Methyltransferase, Cobalt-precorrin-4 Transmethylase, Domain 2"/>
    <property type="match status" value="1"/>
</dbReference>
<dbReference type="Gene3D" id="3.40.50.720">
    <property type="entry name" value="NAD(P)-binding Rossmann-like Domain"/>
    <property type="match status" value="1"/>
</dbReference>
<dbReference type="Gene3D" id="1.10.8.210">
    <property type="entry name" value="Sirohaem synthase, dimerisation domain"/>
    <property type="match status" value="1"/>
</dbReference>
<dbReference type="Gene3D" id="3.30.160.110">
    <property type="entry name" value="Siroheme synthase, domain 2"/>
    <property type="match status" value="1"/>
</dbReference>
<dbReference type="HAMAP" id="MF_01646">
    <property type="entry name" value="Siroheme_synth"/>
    <property type="match status" value="1"/>
</dbReference>
<dbReference type="InterPro" id="IPR000878">
    <property type="entry name" value="4pyrrol_Mease"/>
</dbReference>
<dbReference type="InterPro" id="IPR035996">
    <property type="entry name" value="4pyrrol_Methylase_sf"/>
</dbReference>
<dbReference type="InterPro" id="IPR014777">
    <property type="entry name" value="4pyrrole_Mease_sub1"/>
</dbReference>
<dbReference type="InterPro" id="IPR014776">
    <property type="entry name" value="4pyrrole_Mease_sub2"/>
</dbReference>
<dbReference type="InterPro" id="IPR006366">
    <property type="entry name" value="CobA/CysG_C"/>
</dbReference>
<dbReference type="InterPro" id="IPR036291">
    <property type="entry name" value="NAD(P)-bd_dom_sf"/>
</dbReference>
<dbReference type="InterPro" id="IPR050161">
    <property type="entry name" value="Siro_Cobalamin_biosynth"/>
</dbReference>
<dbReference type="InterPro" id="IPR037115">
    <property type="entry name" value="Sirohaem_synt_dimer_dom_sf"/>
</dbReference>
<dbReference type="InterPro" id="IPR012409">
    <property type="entry name" value="Sirohaem_synth"/>
</dbReference>
<dbReference type="InterPro" id="IPR019478">
    <property type="entry name" value="Sirohaem_synthase_dimer_dom"/>
</dbReference>
<dbReference type="InterPro" id="IPR006367">
    <property type="entry name" value="Sirohaem_synthase_N"/>
</dbReference>
<dbReference type="InterPro" id="IPR003043">
    <property type="entry name" value="Uropor_MeTrfase_CS"/>
</dbReference>
<dbReference type="NCBIfam" id="TIGR01469">
    <property type="entry name" value="cobA_cysG_Cterm"/>
    <property type="match status" value="1"/>
</dbReference>
<dbReference type="NCBIfam" id="TIGR01470">
    <property type="entry name" value="cysG_Nterm"/>
    <property type="match status" value="1"/>
</dbReference>
<dbReference type="NCBIfam" id="NF004790">
    <property type="entry name" value="PRK06136.1"/>
    <property type="match status" value="1"/>
</dbReference>
<dbReference type="NCBIfam" id="NF007922">
    <property type="entry name" value="PRK10637.1"/>
    <property type="match status" value="1"/>
</dbReference>
<dbReference type="PANTHER" id="PTHR45790:SF1">
    <property type="entry name" value="SIROHEME SYNTHASE"/>
    <property type="match status" value="1"/>
</dbReference>
<dbReference type="PANTHER" id="PTHR45790">
    <property type="entry name" value="SIROHEME SYNTHASE-RELATED"/>
    <property type="match status" value="1"/>
</dbReference>
<dbReference type="Pfam" id="PF10414">
    <property type="entry name" value="CysG_dimeriser"/>
    <property type="match status" value="1"/>
</dbReference>
<dbReference type="Pfam" id="PF13241">
    <property type="entry name" value="NAD_binding_7"/>
    <property type="match status" value="1"/>
</dbReference>
<dbReference type="Pfam" id="PF00590">
    <property type="entry name" value="TP_methylase"/>
    <property type="match status" value="1"/>
</dbReference>
<dbReference type="PIRSF" id="PIRSF036426">
    <property type="entry name" value="Sirohaem_synth"/>
    <property type="match status" value="1"/>
</dbReference>
<dbReference type="SUPFAM" id="SSF51735">
    <property type="entry name" value="NAD(P)-binding Rossmann-fold domains"/>
    <property type="match status" value="1"/>
</dbReference>
<dbReference type="SUPFAM" id="SSF75615">
    <property type="entry name" value="Siroheme synthase middle domains-like"/>
    <property type="match status" value="1"/>
</dbReference>
<dbReference type="SUPFAM" id="SSF53790">
    <property type="entry name" value="Tetrapyrrole methylase"/>
    <property type="match status" value="1"/>
</dbReference>
<dbReference type="PROSITE" id="PS00839">
    <property type="entry name" value="SUMT_1"/>
    <property type="match status" value="1"/>
</dbReference>
<dbReference type="PROSITE" id="PS00840">
    <property type="entry name" value="SUMT_2"/>
    <property type="match status" value="1"/>
</dbReference>
<protein>
    <recommendedName>
        <fullName evidence="1">Siroheme synthase</fullName>
    </recommendedName>
    <domain>
        <recommendedName>
            <fullName evidence="1">Uroporphyrinogen-III C-methyltransferase</fullName>
            <shortName evidence="1">Urogen III methylase</shortName>
            <ecNumber evidence="1">2.1.1.107</ecNumber>
        </recommendedName>
        <alternativeName>
            <fullName evidence="1">SUMT</fullName>
        </alternativeName>
        <alternativeName>
            <fullName evidence="1">Uroporphyrinogen III methylase</fullName>
            <shortName evidence="1">UROM</shortName>
        </alternativeName>
    </domain>
    <domain>
        <recommendedName>
            <fullName evidence="1">Precorrin-2 dehydrogenase</fullName>
            <ecNumber evidence="1">1.3.1.76</ecNumber>
        </recommendedName>
    </domain>
    <domain>
        <recommendedName>
            <fullName evidence="1">Sirohydrochlorin ferrochelatase</fullName>
            <ecNumber evidence="1">4.99.1.4</ecNumber>
        </recommendedName>
    </domain>
</protein>